<evidence type="ECO:0000250" key="1"/>
<evidence type="ECO:0000255" key="2">
    <source>
        <dbReference type="PROSITE-ProRule" id="PRU00176"/>
    </source>
</evidence>
<evidence type="ECO:0000303" key="3">
    <source ref="1"/>
</evidence>
<evidence type="ECO:0000305" key="4"/>
<reference key="1">
    <citation type="submission" date="2004-01" db="EMBL/GenBank/DDBJ databases">
        <authorList>
            <consortium name="NIH - Zebrafish Gene Collection (ZGC) project"/>
        </authorList>
    </citation>
    <scope>NUCLEOTIDE SEQUENCE [LARGE SCALE MRNA] (ISOFORMS 1 AND 2)</scope>
    <source>
        <strain>AB</strain>
        <tissue>Embryo</tissue>
    </source>
</reference>
<name>ESRP2_DANRE</name>
<feature type="chain" id="PRO_0000273054" description="Epithelial splicing regulatory protein 2">
    <location>
        <begin position="1"/>
        <end position="736"/>
    </location>
</feature>
<feature type="domain" description="RRM 1" evidence="2">
    <location>
        <begin position="224"/>
        <end position="301"/>
    </location>
</feature>
<feature type="domain" description="RRM 2" evidence="2">
    <location>
        <begin position="325"/>
        <end position="405"/>
    </location>
</feature>
<feature type="domain" description="RRM 3" evidence="2">
    <location>
        <begin position="659"/>
        <end position="736"/>
    </location>
</feature>
<feature type="splice variant" id="VSP_023999" description="In isoform 2." evidence="3">
    <original>QADSVLVLYNWSGQRSGEALVTFPSEKAARRAVAECSNIPLSGHPIHLACCE</original>
    <variation>NPEDYSSLVGVSDQGRSFIQPKEWLCL</variation>
    <location>
        <begin position="685"/>
        <end position="736"/>
    </location>
</feature>
<feature type="sequence conflict" description="In Ref. 1; AAH65688." evidence="4" ref="1">
    <original>L</original>
    <variation>P</variation>
    <location>
        <position position="159"/>
    </location>
</feature>
<feature type="sequence conflict" description="In Ref. 1; AAH45439." evidence="4" ref="1">
    <original>Q</original>
    <variation>R</variation>
    <location>
        <position position="173"/>
    </location>
</feature>
<feature type="sequence conflict" description="In Ref. 1; AAH65688." evidence="4" ref="1">
    <original>D</original>
    <variation>E</variation>
    <location>
        <position position="193"/>
    </location>
</feature>
<feature type="sequence conflict" description="In Ref. 1; AAH65688." evidence="4" ref="1">
    <original>A</original>
    <variation>S</variation>
    <location>
        <position position="219"/>
    </location>
</feature>
<feature type="sequence conflict" description="In Ref. 1; AAH45439." evidence="4" ref="1">
    <original>F</original>
    <variation>L</variation>
    <location>
        <position position="442"/>
    </location>
</feature>
<feature type="sequence conflict" description="In Ref. 1; AAH45439." evidence="4" ref="1">
    <original>A</original>
    <variation>G</variation>
    <location>
        <position position="577"/>
    </location>
</feature>
<keyword id="KW-0025">Alternative splicing</keyword>
<keyword id="KW-0507">mRNA processing</keyword>
<keyword id="KW-0508">mRNA splicing</keyword>
<keyword id="KW-0539">Nucleus</keyword>
<keyword id="KW-1185">Reference proteome</keyword>
<keyword id="KW-0677">Repeat</keyword>
<keyword id="KW-0694">RNA-binding</keyword>
<comment type="function">
    <text evidence="1">mRNA splicing factor that regulates the formation of epithelial cell-specific isoforms. Specifically regulates the expression of FGFR2-IIIb, an epithelial cell-specific isoform of fgfr2. Acts by directly binding specific sequences in mRNAs. Binds the GU-rich sequence motifs in the ISE/ISS-3, a cis-element regulatory region present in the mRNA of fgfr2 (By similarity).</text>
</comment>
<comment type="subcellular location">
    <subcellularLocation>
        <location evidence="1">Nucleus</location>
    </subcellularLocation>
</comment>
<comment type="alternative products">
    <event type="alternative splicing"/>
    <isoform>
        <id>Q7ZVR8-1</id>
        <name>1</name>
        <sequence type="displayed"/>
    </isoform>
    <isoform>
        <id>Q7ZVR8-2</id>
        <name>2</name>
        <sequence type="described" ref="VSP_023999"/>
    </isoform>
</comment>
<comment type="similarity">
    <text evidence="4">Belongs to the ESRP family.</text>
</comment>
<dbReference type="EMBL" id="BC045439">
    <property type="protein sequence ID" value="AAH45439.1"/>
    <property type="molecule type" value="mRNA"/>
</dbReference>
<dbReference type="EMBL" id="BC065688">
    <property type="protein sequence ID" value="AAH65688.1"/>
    <property type="molecule type" value="mRNA"/>
</dbReference>
<dbReference type="RefSeq" id="NP_954966.1">
    <property type="nucleotide sequence ID" value="NM_199272.1"/>
</dbReference>
<dbReference type="SMR" id="Q7ZVR8"/>
<dbReference type="FunCoup" id="Q7ZVR8">
    <property type="interactions" value="695"/>
</dbReference>
<dbReference type="STRING" id="7955.ENSDARP00000015568"/>
<dbReference type="PaxDb" id="7955-ENSDARP00000015568"/>
<dbReference type="GeneID" id="572992"/>
<dbReference type="KEGG" id="dre:572992"/>
<dbReference type="AGR" id="ZFIN:ZDB-GENE-030131-9824"/>
<dbReference type="CTD" id="80004"/>
<dbReference type="ZFIN" id="ZDB-GENE-030131-9824">
    <property type="gene designation" value="esrp2"/>
</dbReference>
<dbReference type="eggNOG" id="KOG1365">
    <property type="taxonomic scope" value="Eukaryota"/>
</dbReference>
<dbReference type="InParanoid" id="Q7ZVR8"/>
<dbReference type="OrthoDB" id="431068at2759"/>
<dbReference type="PhylomeDB" id="Q7ZVR8"/>
<dbReference type="PRO" id="PR:Q7ZVR8"/>
<dbReference type="Proteomes" id="UP000000437">
    <property type="component" value="Alternate scaffold 7"/>
</dbReference>
<dbReference type="Proteomes" id="UP000000437">
    <property type="component" value="Chromosome 7"/>
</dbReference>
<dbReference type="GO" id="GO:0005654">
    <property type="term" value="C:nucleoplasm"/>
    <property type="evidence" value="ECO:0000318"/>
    <property type="project" value="GO_Central"/>
</dbReference>
<dbReference type="GO" id="GO:0005634">
    <property type="term" value="C:nucleus"/>
    <property type="evidence" value="ECO:0000250"/>
    <property type="project" value="UniProtKB"/>
</dbReference>
<dbReference type="GO" id="GO:1990904">
    <property type="term" value="C:ribonucleoprotein complex"/>
    <property type="evidence" value="ECO:0000318"/>
    <property type="project" value="GO_Central"/>
</dbReference>
<dbReference type="GO" id="GO:0003729">
    <property type="term" value="F:mRNA binding"/>
    <property type="evidence" value="ECO:0000250"/>
    <property type="project" value="UniProtKB"/>
</dbReference>
<dbReference type="GO" id="GO:1904888">
    <property type="term" value="P:cranial skeletal system development"/>
    <property type="evidence" value="ECO:0000316"/>
    <property type="project" value="ZFIN"/>
</dbReference>
<dbReference type="GO" id="GO:1905748">
    <property type="term" value="P:hard palate morphogenesis"/>
    <property type="evidence" value="ECO:0000316"/>
    <property type="project" value="ZFIN"/>
</dbReference>
<dbReference type="GO" id="GO:0006397">
    <property type="term" value="P:mRNA processing"/>
    <property type="evidence" value="ECO:0007669"/>
    <property type="project" value="UniProtKB-KW"/>
</dbReference>
<dbReference type="GO" id="GO:0043484">
    <property type="term" value="P:regulation of RNA splicing"/>
    <property type="evidence" value="ECO:0000250"/>
    <property type="project" value="UniProtKB"/>
</dbReference>
<dbReference type="GO" id="GO:0008380">
    <property type="term" value="P:RNA splicing"/>
    <property type="evidence" value="ECO:0007669"/>
    <property type="project" value="UniProtKB-KW"/>
</dbReference>
<dbReference type="CDD" id="cd12740">
    <property type="entry name" value="RRM2_ESRP2"/>
    <property type="match status" value="1"/>
</dbReference>
<dbReference type="CDD" id="cd12742">
    <property type="entry name" value="RRM3_ESRP1_ESRP2"/>
    <property type="match status" value="1"/>
</dbReference>
<dbReference type="CDD" id="cd12515">
    <property type="entry name" value="RRM5_RBM12_like"/>
    <property type="match status" value="1"/>
</dbReference>
<dbReference type="FunFam" id="3.30.70.330:FF:000041">
    <property type="entry name" value="Epithelial splicing regulatory protein 1"/>
    <property type="match status" value="1"/>
</dbReference>
<dbReference type="FunFam" id="3.30.70.330:FF:000070">
    <property type="entry name" value="Epithelial splicing regulatory protein 1"/>
    <property type="match status" value="1"/>
</dbReference>
<dbReference type="FunFam" id="3.30.70.330:FF:000056">
    <property type="entry name" value="epithelial splicing regulatory protein 1 isoform X1"/>
    <property type="match status" value="1"/>
</dbReference>
<dbReference type="Gene3D" id="3.30.70.330">
    <property type="match status" value="4"/>
</dbReference>
<dbReference type="Gene3D" id="3.30.420.10">
    <property type="entry name" value="Ribonuclease H-like superfamily/Ribonuclease H"/>
    <property type="match status" value="1"/>
</dbReference>
<dbReference type="InterPro" id="IPR050666">
    <property type="entry name" value="ESRP"/>
</dbReference>
<dbReference type="InterPro" id="IPR012677">
    <property type="entry name" value="Nucleotide-bd_a/b_plait_sf"/>
</dbReference>
<dbReference type="InterPro" id="IPR035979">
    <property type="entry name" value="RBD_domain_sf"/>
</dbReference>
<dbReference type="InterPro" id="IPR012337">
    <property type="entry name" value="RNaseH-like_sf"/>
</dbReference>
<dbReference type="InterPro" id="IPR036397">
    <property type="entry name" value="RNaseH_sf"/>
</dbReference>
<dbReference type="InterPro" id="IPR000504">
    <property type="entry name" value="RRM_dom"/>
</dbReference>
<dbReference type="PANTHER" id="PTHR13976">
    <property type="entry name" value="HETEROGENEOUS NUCLEAR RIBONUCLEOPROTEIN-RELATED"/>
    <property type="match status" value="1"/>
</dbReference>
<dbReference type="Pfam" id="PF00076">
    <property type="entry name" value="RRM_1"/>
    <property type="match status" value="1"/>
</dbReference>
<dbReference type="SMART" id="SM00360">
    <property type="entry name" value="RRM"/>
    <property type="match status" value="4"/>
</dbReference>
<dbReference type="SUPFAM" id="SSF53098">
    <property type="entry name" value="Ribonuclease H-like"/>
    <property type="match status" value="1"/>
</dbReference>
<dbReference type="SUPFAM" id="SSF54928">
    <property type="entry name" value="RNA-binding domain, RBD"/>
    <property type="match status" value="3"/>
</dbReference>
<dbReference type="PROSITE" id="PS50102">
    <property type="entry name" value="RRM"/>
    <property type="match status" value="1"/>
</dbReference>
<sequence length="736" mass="80830">MASHSDTLVVFFGATAGANGGKLGSDERELILLVWQIVDLHENKVGKLHRTLVQPDSVDLSEQCKEETGLTAEELCKAEPLESVLQQFHQSVSAELKSLGRSSYTLCVDGPLLIRQVLHPEASKKNLVLPECFYTFVDLKKEFHKCCPNAGPVKDLTLLSMLDYVCIQATVEQEAGLREVKDMVLLILHVLADPYNHKFSAFETVNYKFESGACSKTEAVDSETVIRARGLPWQSSDQDIARFFKGLNIAKGGVALCLNAQGRRNGEALVRFINSEHRDMALDRHKHHMGSRYIEVYKATGEEFLKIAGGTSNEVAQFLSKENQMIIRMRGLPFTATPQDVLGFLGPECPVTDGTEGLLFVKYPDGRPTGDAFVLFACEEYAQNALKKHKQILGKRYIELFRSTAAEVQQVLNRYMSTPLISTLPPPPPPMVSVPVLATPPFITTGNTRDCIRLRGLPYTAAIEDILEFMGEHTIDIKPHGVHMVLNQQGRPSGDAFIQMKSADRAFMVAQKCHKKMMKDRYVEVFQCSTEEMSFVLMGGTLNRSGLSPPPCKLPCLSPPTYAAFPAAPAMLPTEAALYQPPLLATPRTPQAPTHSPAPAFAYYSPQLYMNMNMSYTTYYPSPPVSPSTVSYFAAPPGSVAAAVAAQPTPAILPPQPGALVRMQGLPYNAGVKDILSFFQGYQLQADSVLVLYNWSGQRSGEALVTFPSEKAARRAVAECSNIPLSGHPIHLACCE</sequence>
<proteinExistence type="evidence at transcript level"/>
<organism>
    <name type="scientific">Danio rerio</name>
    <name type="common">Zebrafish</name>
    <name type="synonym">Brachydanio rerio</name>
    <dbReference type="NCBI Taxonomy" id="7955"/>
    <lineage>
        <taxon>Eukaryota</taxon>
        <taxon>Metazoa</taxon>
        <taxon>Chordata</taxon>
        <taxon>Craniata</taxon>
        <taxon>Vertebrata</taxon>
        <taxon>Euteleostomi</taxon>
        <taxon>Actinopterygii</taxon>
        <taxon>Neopterygii</taxon>
        <taxon>Teleostei</taxon>
        <taxon>Ostariophysi</taxon>
        <taxon>Cypriniformes</taxon>
        <taxon>Danionidae</taxon>
        <taxon>Danioninae</taxon>
        <taxon>Danio</taxon>
    </lineage>
</organism>
<protein>
    <recommendedName>
        <fullName>Epithelial splicing regulatory protein 2</fullName>
    </recommendedName>
    <alternativeName>
        <fullName>RNA-binding motif protein 35B</fullName>
    </alternativeName>
    <alternativeName>
        <fullName>RNA-binding protein 35B</fullName>
    </alternativeName>
</protein>
<accession>Q7ZVR8</accession>
<accession>Q6P0A9</accession>
<gene>
    <name type="primary">esrp2</name>
    <name type="synonym">rbm35b</name>
    <name type="ORF">zgc:77254</name>
</gene>